<gene>
    <name evidence="1" type="primary">rpoZ</name>
    <name type="ordered locus">SYNPCC7002_A0614</name>
</gene>
<proteinExistence type="inferred from homology"/>
<reference key="1">
    <citation type="submission" date="2008-02" db="EMBL/GenBank/DDBJ databases">
        <title>Complete sequence of Synechococcus sp. PCC 7002.</title>
        <authorList>
            <person name="Li T."/>
            <person name="Zhao J."/>
            <person name="Zhao C."/>
            <person name="Liu Z."/>
            <person name="Zhao F."/>
            <person name="Marquardt J."/>
            <person name="Nomura C.T."/>
            <person name="Persson S."/>
            <person name="Detter J.C."/>
            <person name="Richardson P.M."/>
            <person name="Lanz C."/>
            <person name="Schuster S.C."/>
            <person name="Wang J."/>
            <person name="Li S."/>
            <person name="Huang X."/>
            <person name="Cai T."/>
            <person name="Yu Z."/>
            <person name="Luo J."/>
            <person name="Zhao J."/>
            <person name="Bryant D.A."/>
        </authorList>
    </citation>
    <scope>NUCLEOTIDE SEQUENCE [LARGE SCALE GENOMIC DNA]</scope>
    <source>
        <strain>ATCC 27264 / PCC 7002 / PR-6</strain>
    </source>
</reference>
<accession>B1XPZ2</accession>
<dbReference type="EC" id="2.7.7.6" evidence="1"/>
<dbReference type="EMBL" id="CP000951">
    <property type="protein sequence ID" value="ACA98620.1"/>
    <property type="molecule type" value="Genomic_DNA"/>
</dbReference>
<dbReference type="RefSeq" id="WP_012306244.1">
    <property type="nucleotide sequence ID" value="NZ_JAHHPU010000001.1"/>
</dbReference>
<dbReference type="SMR" id="B1XPZ2"/>
<dbReference type="STRING" id="32049.SYNPCC7002_A0614"/>
<dbReference type="KEGG" id="syp:SYNPCC7002_A0614"/>
<dbReference type="eggNOG" id="ENOG5032RMS">
    <property type="taxonomic scope" value="Bacteria"/>
</dbReference>
<dbReference type="HOGENOM" id="CLU_175526_0_0_3"/>
<dbReference type="Proteomes" id="UP000001688">
    <property type="component" value="Chromosome"/>
</dbReference>
<dbReference type="GO" id="GO:0000428">
    <property type="term" value="C:DNA-directed RNA polymerase complex"/>
    <property type="evidence" value="ECO:0007669"/>
    <property type="project" value="UniProtKB-KW"/>
</dbReference>
<dbReference type="GO" id="GO:0003677">
    <property type="term" value="F:DNA binding"/>
    <property type="evidence" value="ECO:0007669"/>
    <property type="project" value="UniProtKB-UniRule"/>
</dbReference>
<dbReference type="GO" id="GO:0003899">
    <property type="term" value="F:DNA-directed RNA polymerase activity"/>
    <property type="evidence" value="ECO:0007669"/>
    <property type="project" value="UniProtKB-UniRule"/>
</dbReference>
<dbReference type="GO" id="GO:0006351">
    <property type="term" value="P:DNA-templated transcription"/>
    <property type="evidence" value="ECO:0007669"/>
    <property type="project" value="UniProtKB-UniRule"/>
</dbReference>
<dbReference type="HAMAP" id="MF_00366">
    <property type="entry name" value="RNApol_bact_RpoZ"/>
    <property type="match status" value="1"/>
</dbReference>
<dbReference type="InterPro" id="IPR003716">
    <property type="entry name" value="DNA-dir_RNA_pol_omega"/>
</dbReference>
<dbReference type="InterPro" id="IPR006110">
    <property type="entry name" value="Pol_omega/Rpo6/RPB6"/>
</dbReference>
<dbReference type="InterPro" id="IPR036161">
    <property type="entry name" value="RPB6/omega-like_sf"/>
</dbReference>
<dbReference type="NCBIfam" id="NF001574">
    <property type="entry name" value="PRK00392.2-5"/>
    <property type="match status" value="1"/>
</dbReference>
<dbReference type="Pfam" id="PF01192">
    <property type="entry name" value="RNA_pol_Rpb6"/>
    <property type="match status" value="1"/>
</dbReference>
<dbReference type="SUPFAM" id="SSF63562">
    <property type="entry name" value="RPB6/omega subunit-like"/>
    <property type="match status" value="1"/>
</dbReference>
<evidence type="ECO:0000255" key="1">
    <source>
        <dbReference type="HAMAP-Rule" id="MF_00366"/>
    </source>
</evidence>
<feature type="chain" id="PRO_1000121283" description="DNA-directed RNA polymerase subunit omega">
    <location>
        <begin position="1"/>
        <end position="75"/>
    </location>
</feature>
<organism>
    <name type="scientific">Picosynechococcus sp. (strain ATCC 27264 / PCC 7002 / PR-6)</name>
    <name type="common">Agmenellum quadruplicatum</name>
    <dbReference type="NCBI Taxonomy" id="32049"/>
    <lineage>
        <taxon>Bacteria</taxon>
        <taxon>Bacillati</taxon>
        <taxon>Cyanobacteriota</taxon>
        <taxon>Cyanophyceae</taxon>
        <taxon>Oscillatoriophycideae</taxon>
        <taxon>Chroococcales</taxon>
        <taxon>Geminocystaceae</taxon>
        <taxon>Picosynechococcus</taxon>
    </lineage>
</organism>
<protein>
    <recommendedName>
        <fullName evidence="1">DNA-directed RNA polymerase subunit omega</fullName>
        <shortName evidence="1">RNAP omega subunit</shortName>
        <ecNumber evidence="1">2.7.7.6</ecNumber>
    </recommendedName>
    <alternativeName>
        <fullName evidence="1">RNA polymerase omega subunit</fullName>
    </alternativeName>
    <alternativeName>
        <fullName evidence="1">Transcriptase subunit omega</fullName>
    </alternativeName>
</protein>
<sequence length="75" mass="8795">MQKRSSFDSAEIMHRAEDLMQAASNRYRITVQVAQRAKRRRYEEFDAVEDPLMKPPIRAIIEMSDELTQPEIIGE</sequence>
<keyword id="KW-0240">DNA-directed RNA polymerase</keyword>
<keyword id="KW-0548">Nucleotidyltransferase</keyword>
<keyword id="KW-1185">Reference proteome</keyword>
<keyword id="KW-0804">Transcription</keyword>
<keyword id="KW-0808">Transferase</keyword>
<name>RPOZ_PICP2</name>
<comment type="function">
    <text evidence="1">Promotes RNA polymerase assembly. Latches the N- and C-terminal regions of the beta' subunit thereby facilitating its interaction with the beta and alpha subunits.</text>
</comment>
<comment type="catalytic activity">
    <reaction evidence="1">
        <text>RNA(n) + a ribonucleoside 5'-triphosphate = RNA(n+1) + diphosphate</text>
        <dbReference type="Rhea" id="RHEA:21248"/>
        <dbReference type="Rhea" id="RHEA-COMP:14527"/>
        <dbReference type="Rhea" id="RHEA-COMP:17342"/>
        <dbReference type="ChEBI" id="CHEBI:33019"/>
        <dbReference type="ChEBI" id="CHEBI:61557"/>
        <dbReference type="ChEBI" id="CHEBI:140395"/>
        <dbReference type="EC" id="2.7.7.6"/>
    </reaction>
</comment>
<comment type="subunit">
    <text evidence="1">In cyanobacteria the RNAP catalytic core is composed of 2 alpha, 1 beta, 1 beta', 1 gamma and 1 omega subunit. When a sigma factor is associated with the core the holoenzyme is formed, which can initiate transcription.</text>
</comment>
<comment type="similarity">
    <text evidence="1">Belongs to the RNA polymerase subunit omega family.</text>
</comment>